<organism>
    <name type="scientific">Bacillus cereus (strain ATCC 14579 / DSM 31 / CCUG 7414 / JCM 2152 / NBRC 15305 / NCIMB 9373 / NCTC 2599 / NRRL B-3711)</name>
    <dbReference type="NCBI Taxonomy" id="226900"/>
    <lineage>
        <taxon>Bacteria</taxon>
        <taxon>Bacillati</taxon>
        <taxon>Bacillota</taxon>
        <taxon>Bacilli</taxon>
        <taxon>Bacillales</taxon>
        <taxon>Bacillaceae</taxon>
        <taxon>Bacillus</taxon>
        <taxon>Bacillus cereus group</taxon>
    </lineage>
</organism>
<reference key="1">
    <citation type="journal article" date="2003" name="Nature">
        <title>Genome sequence of Bacillus cereus and comparative analysis with Bacillus anthracis.</title>
        <authorList>
            <person name="Ivanova N."/>
            <person name="Sorokin A."/>
            <person name="Anderson I."/>
            <person name="Galleron N."/>
            <person name="Candelon B."/>
            <person name="Kapatral V."/>
            <person name="Bhattacharyya A."/>
            <person name="Reznik G."/>
            <person name="Mikhailova N."/>
            <person name="Lapidus A."/>
            <person name="Chu L."/>
            <person name="Mazur M."/>
            <person name="Goltsman E."/>
            <person name="Larsen N."/>
            <person name="D'Souza M."/>
            <person name="Walunas T."/>
            <person name="Grechkin Y."/>
            <person name="Pusch G."/>
            <person name="Haselkorn R."/>
            <person name="Fonstein M."/>
            <person name="Ehrlich S.D."/>
            <person name="Overbeek R."/>
            <person name="Kyrpides N.C."/>
        </authorList>
    </citation>
    <scope>NUCLEOTIDE SEQUENCE [LARGE SCALE GENOMIC DNA]</scope>
    <source>
        <strain>ATCC 14579 / DSM 31 / CCUG 7414 / JCM 2152 / NBRC 15305 / NCIMB 9373 / NCTC 2599 / NRRL B-3711</strain>
    </source>
</reference>
<dbReference type="EC" id="2.7.7.72" evidence="1"/>
<dbReference type="EMBL" id="AE016877">
    <property type="protein sequence ID" value="AAP08516.1"/>
    <property type="molecule type" value="Genomic_DNA"/>
</dbReference>
<dbReference type="RefSeq" id="NP_831315.1">
    <property type="nucleotide sequence ID" value="NC_004722.1"/>
</dbReference>
<dbReference type="RefSeq" id="WP_000439321.1">
    <property type="nucleotide sequence ID" value="NZ_CP138336.1"/>
</dbReference>
<dbReference type="SMR" id="Q81FP0"/>
<dbReference type="STRING" id="226900.BC_1536"/>
<dbReference type="KEGG" id="bce:BC1536"/>
<dbReference type="PATRIC" id="fig|226900.8.peg.1513"/>
<dbReference type="HOGENOM" id="CLU_015961_3_0_9"/>
<dbReference type="OrthoDB" id="9805698at2"/>
<dbReference type="Proteomes" id="UP000001417">
    <property type="component" value="Chromosome"/>
</dbReference>
<dbReference type="GO" id="GO:0005524">
    <property type="term" value="F:ATP binding"/>
    <property type="evidence" value="ECO:0007669"/>
    <property type="project" value="UniProtKB-UniRule"/>
</dbReference>
<dbReference type="GO" id="GO:0004810">
    <property type="term" value="F:CCA tRNA nucleotidyltransferase activity"/>
    <property type="evidence" value="ECO:0007669"/>
    <property type="project" value="UniProtKB-UniRule"/>
</dbReference>
<dbReference type="GO" id="GO:0000287">
    <property type="term" value="F:magnesium ion binding"/>
    <property type="evidence" value="ECO:0007669"/>
    <property type="project" value="UniProtKB-UniRule"/>
</dbReference>
<dbReference type="GO" id="GO:0000049">
    <property type="term" value="F:tRNA binding"/>
    <property type="evidence" value="ECO:0000318"/>
    <property type="project" value="GO_Central"/>
</dbReference>
<dbReference type="GO" id="GO:0042245">
    <property type="term" value="P:RNA repair"/>
    <property type="evidence" value="ECO:0007669"/>
    <property type="project" value="UniProtKB-KW"/>
</dbReference>
<dbReference type="GO" id="GO:0001680">
    <property type="term" value="P:tRNA 3'-terminal CCA addition"/>
    <property type="evidence" value="ECO:0007669"/>
    <property type="project" value="UniProtKB-UniRule"/>
</dbReference>
<dbReference type="GO" id="GO:0008033">
    <property type="term" value="P:tRNA processing"/>
    <property type="evidence" value="ECO:0000318"/>
    <property type="project" value="GO_Central"/>
</dbReference>
<dbReference type="CDD" id="cd05398">
    <property type="entry name" value="NT_ClassII-CCAase"/>
    <property type="match status" value="1"/>
</dbReference>
<dbReference type="Gene3D" id="1.10.110.30">
    <property type="match status" value="1"/>
</dbReference>
<dbReference type="Gene3D" id="1.10.246.80">
    <property type="match status" value="1"/>
</dbReference>
<dbReference type="Gene3D" id="1.20.58.560">
    <property type="match status" value="1"/>
</dbReference>
<dbReference type="Gene3D" id="3.30.460.10">
    <property type="entry name" value="Beta Polymerase, domain 2"/>
    <property type="match status" value="1"/>
</dbReference>
<dbReference type="HAMAP" id="MF_01263">
    <property type="entry name" value="CCA_bact_type3"/>
    <property type="match status" value="1"/>
</dbReference>
<dbReference type="InterPro" id="IPR050264">
    <property type="entry name" value="Bact_CCA-adding_enz_type3_sf"/>
</dbReference>
<dbReference type="InterPro" id="IPR032810">
    <property type="entry name" value="CCA-adding_enz_C"/>
</dbReference>
<dbReference type="InterPro" id="IPR023068">
    <property type="entry name" value="CCA-adding_enz_firmicutes"/>
</dbReference>
<dbReference type="InterPro" id="IPR043519">
    <property type="entry name" value="NT_sf"/>
</dbReference>
<dbReference type="InterPro" id="IPR002646">
    <property type="entry name" value="PolA_pol_head_dom"/>
</dbReference>
<dbReference type="InterPro" id="IPR032828">
    <property type="entry name" value="PolyA_RNA-bd"/>
</dbReference>
<dbReference type="NCBIfam" id="NF009814">
    <property type="entry name" value="PRK13299.1"/>
    <property type="match status" value="1"/>
</dbReference>
<dbReference type="PANTHER" id="PTHR46173">
    <property type="entry name" value="CCA TRNA NUCLEOTIDYLTRANSFERASE 1, MITOCHONDRIAL"/>
    <property type="match status" value="1"/>
</dbReference>
<dbReference type="PANTHER" id="PTHR46173:SF1">
    <property type="entry name" value="CCA TRNA NUCLEOTIDYLTRANSFERASE 1, MITOCHONDRIAL"/>
    <property type="match status" value="1"/>
</dbReference>
<dbReference type="Pfam" id="PF01743">
    <property type="entry name" value="PolyA_pol"/>
    <property type="match status" value="1"/>
</dbReference>
<dbReference type="Pfam" id="PF12627">
    <property type="entry name" value="PolyA_pol_RNAbd"/>
    <property type="match status" value="1"/>
</dbReference>
<dbReference type="Pfam" id="PF13735">
    <property type="entry name" value="tRNA_NucTran2_2"/>
    <property type="match status" value="1"/>
</dbReference>
<dbReference type="SUPFAM" id="SSF81301">
    <property type="entry name" value="Nucleotidyltransferase"/>
    <property type="match status" value="1"/>
</dbReference>
<dbReference type="SUPFAM" id="SSF81891">
    <property type="entry name" value="Poly A polymerase C-terminal region-like"/>
    <property type="match status" value="1"/>
</dbReference>
<evidence type="ECO:0000255" key="1">
    <source>
        <dbReference type="HAMAP-Rule" id="MF_01263"/>
    </source>
</evidence>
<name>CCA_BACCR</name>
<proteinExistence type="inferred from homology"/>
<protein>
    <recommendedName>
        <fullName evidence="1">CCA-adding enzyme</fullName>
        <ecNumber evidence="1">2.7.7.72</ecNumber>
    </recommendedName>
    <alternativeName>
        <fullName evidence="1">CCA tRNA nucleotidyltransferase</fullName>
    </alternativeName>
    <alternativeName>
        <fullName evidence="1">tRNA CCA-pyrophosphorylase</fullName>
    </alternativeName>
    <alternativeName>
        <fullName evidence="1">tRNA adenylyl-/cytidylyl- transferase</fullName>
    </alternativeName>
    <alternativeName>
        <fullName evidence="1">tRNA nucleotidyltransferase</fullName>
    </alternativeName>
    <alternativeName>
        <fullName evidence="1">tRNA-NT</fullName>
    </alternativeName>
</protein>
<gene>
    <name evidence="1" type="primary">cca</name>
    <name type="ordered locus">BC_1536</name>
</gene>
<keyword id="KW-0067">ATP-binding</keyword>
<keyword id="KW-0460">Magnesium</keyword>
<keyword id="KW-0479">Metal-binding</keyword>
<keyword id="KW-0547">Nucleotide-binding</keyword>
<keyword id="KW-0548">Nucleotidyltransferase</keyword>
<keyword id="KW-1185">Reference proteome</keyword>
<keyword id="KW-0692">RNA repair</keyword>
<keyword id="KW-0694">RNA-binding</keyword>
<keyword id="KW-0808">Transferase</keyword>
<keyword id="KW-0819">tRNA processing</keyword>
<sequence length="397" mass="46016">MERFKKASSIIETLKQQGHEAYFVGGSVRDLIIDRPIGDIDIATSALPEEVMAIFPRNVPVGLEHGTVIVVENGEPYEVTTFRTESEYEDFRRPSSVQFVRSLEEDLKRRDFTMNAIAMTEEGKMVDLFAGQEAIQQREIVTVGNAADRFQEDALRMMRGIRFVSTLGFSLEMKTKQAIETYGHLLEHIAIERITVEFEKLLTGTYCVKGLKELVETKLFSHLPYLQMSEERLLKATQYKWDSFETDIEAWAFFLYCIGEEHPSVFLRQWKFSNKKIKDIVAVLLTIRTRKEKDWDTVLLYKTGIHIAEMAERVYEAMIERYDPTSVERVQSMFHALPIQERQEMNVTGNDLLNWANKKPGPWVAEMLQKIEEAIVQGNVVNEKERIREWLQGCNLL</sequence>
<comment type="function">
    <text evidence="1">Catalyzes the addition and repair of the essential 3'-terminal CCA sequence in tRNAs without using a nucleic acid template. Adds these three nucleotides in the order of C, C, and A to the tRNA nucleotide-73, using CTP and ATP as substrates and producing inorganic pyrophosphate. tRNA 3'-terminal CCA addition is required both for tRNA processing and repair. Also involved in tRNA surveillance by mediating tandem CCA addition to generate a CCACCA at the 3' terminus of unstable tRNAs. While stable tRNAs receive only 3'-terminal CCA, unstable tRNAs are marked with CCACCA and rapidly degraded.</text>
</comment>
<comment type="catalytic activity">
    <reaction evidence="1">
        <text>a tRNA precursor + 2 CTP + ATP = a tRNA with a 3' CCA end + 3 diphosphate</text>
        <dbReference type="Rhea" id="RHEA:14433"/>
        <dbReference type="Rhea" id="RHEA-COMP:10465"/>
        <dbReference type="Rhea" id="RHEA-COMP:10468"/>
        <dbReference type="ChEBI" id="CHEBI:30616"/>
        <dbReference type="ChEBI" id="CHEBI:33019"/>
        <dbReference type="ChEBI" id="CHEBI:37563"/>
        <dbReference type="ChEBI" id="CHEBI:74896"/>
        <dbReference type="ChEBI" id="CHEBI:83071"/>
        <dbReference type="EC" id="2.7.7.72"/>
    </reaction>
</comment>
<comment type="catalytic activity">
    <reaction evidence="1">
        <text>a tRNA with a 3' CCA end + 2 CTP + ATP = a tRNA with a 3' CCACCA end + 3 diphosphate</text>
        <dbReference type="Rhea" id="RHEA:76235"/>
        <dbReference type="Rhea" id="RHEA-COMP:10468"/>
        <dbReference type="Rhea" id="RHEA-COMP:18655"/>
        <dbReference type="ChEBI" id="CHEBI:30616"/>
        <dbReference type="ChEBI" id="CHEBI:33019"/>
        <dbReference type="ChEBI" id="CHEBI:37563"/>
        <dbReference type="ChEBI" id="CHEBI:83071"/>
        <dbReference type="ChEBI" id="CHEBI:195187"/>
    </reaction>
    <physiologicalReaction direction="left-to-right" evidence="1">
        <dbReference type="Rhea" id="RHEA:76236"/>
    </physiologicalReaction>
</comment>
<comment type="cofactor">
    <cofactor evidence="1">
        <name>Mg(2+)</name>
        <dbReference type="ChEBI" id="CHEBI:18420"/>
    </cofactor>
</comment>
<comment type="subunit">
    <text evidence="1">Homodimer.</text>
</comment>
<comment type="miscellaneous">
    <text evidence="1">A single active site specifically recognizes both ATP and CTP and is responsible for their addition.</text>
</comment>
<comment type="similarity">
    <text evidence="1">Belongs to the tRNA nucleotidyltransferase/poly(A) polymerase family. Bacterial CCA-adding enzyme type 3 subfamily.</text>
</comment>
<feature type="chain" id="PRO_0000139027" description="CCA-adding enzyme">
    <location>
        <begin position="1"/>
        <end position="397"/>
    </location>
</feature>
<feature type="binding site" evidence="1">
    <location>
        <position position="26"/>
    </location>
    <ligand>
        <name>ATP</name>
        <dbReference type="ChEBI" id="CHEBI:30616"/>
    </ligand>
</feature>
<feature type="binding site" evidence="1">
    <location>
        <position position="26"/>
    </location>
    <ligand>
        <name>CTP</name>
        <dbReference type="ChEBI" id="CHEBI:37563"/>
    </ligand>
</feature>
<feature type="binding site" evidence="1">
    <location>
        <position position="29"/>
    </location>
    <ligand>
        <name>ATP</name>
        <dbReference type="ChEBI" id="CHEBI:30616"/>
    </ligand>
</feature>
<feature type="binding site" evidence="1">
    <location>
        <position position="29"/>
    </location>
    <ligand>
        <name>CTP</name>
        <dbReference type="ChEBI" id="CHEBI:37563"/>
    </ligand>
</feature>
<feature type="binding site" evidence="1">
    <location>
        <position position="39"/>
    </location>
    <ligand>
        <name>Mg(2+)</name>
        <dbReference type="ChEBI" id="CHEBI:18420"/>
    </ligand>
</feature>
<feature type="binding site" evidence="1">
    <location>
        <position position="41"/>
    </location>
    <ligand>
        <name>Mg(2+)</name>
        <dbReference type="ChEBI" id="CHEBI:18420"/>
    </ligand>
</feature>
<feature type="binding site" evidence="1">
    <location>
        <position position="110"/>
    </location>
    <ligand>
        <name>ATP</name>
        <dbReference type="ChEBI" id="CHEBI:30616"/>
    </ligand>
</feature>
<feature type="binding site" evidence="1">
    <location>
        <position position="110"/>
    </location>
    <ligand>
        <name>CTP</name>
        <dbReference type="ChEBI" id="CHEBI:37563"/>
    </ligand>
</feature>
<feature type="binding site" evidence="1">
    <location>
        <position position="153"/>
    </location>
    <ligand>
        <name>ATP</name>
        <dbReference type="ChEBI" id="CHEBI:30616"/>
    </ligand>
</feature>
<feature type="binding site" evidence="1">
    <location>
        <position position="153"/>
    </location>
    <ligand>
        <name>CTP</name>
        <dbReference type="ChEBI" id="CHEBI:37563"/>
    </ligand>
</feature>
<feature type="binding site" evidence="1">
    <location>
        <position position="156"/>
    </location>
    <ligand>
        <name>ATP</name>
        <dbReference type="ChEBI" id="CHEBI:30616"/>
    </ligand>
</feature>
<feature type="binding site" evidence="1">
    <location>
        <position position="156"/>
    </location>
    <ligand>
        <name>CTP</name>
        <dbReference type="ChEBI" id="CHEBI:37563"/>
    </ligand>
</feature>
<feature type="binding site" evidence="1">
    <location>
        <position position="159"/>
    </location>
    <ligand>
        <name>ATP</name>
        <dbReference type="ChEBI" id="CHEBI:30616"/>
    </ligand>
</feature>
<feature type="binding site" evidence="1">
    <location>
        <position position="159"/>
    </location>
    <ligand>
        <name>CTP</name>
        <dbReference type="ChEBI" id="CHEBI:37563"/>
    </ligand>
</feature>
<feature type="binding site" evidence="1">
    <location>
        <position position="162"/>
    </location>
    <ligand>
        <name>ATP</name>
        <dbReference type="ChEBI" id="CHEBI:30616"/>
    </ligand>
</feature>
<feature type="binding site" evidence="1">
    <location>
        <position position="162"/>
    </location>
    <ligand>
        <name>CTP</name>
        <dbReference type="ChEBI" id="CHEBI:37563"/>
    </ligand>
</feature>
<accession>Q81FP0</accession>